<geneLocation type="chloroplast"/>
<accession>Q14F99</accession>
<proteinExistence type="inferred from homology"/>
<gene>
    <name type="primary">rps7-A</name>
</gene>
<gene>
    <name type="primary">rps7-B</name>
</gene>
<dbReference type="EMBL" id="AP008956">
    <property type="protein sequence ID" value="BAE97250.1"/>
    <property type="molecule type" value="Genomic_DNA"/>
</dbReference>
<dbReference type="EMBL" id="AP008956">
    <property type="protein sequence ID" value="BAE97263.1"/>
    <property type="molecule type" value="Genomic_DNA"/>
</dbReference>
<dbReference type="SMR" id="Q14F99"/>
<dbReference type="KEGG" id="palz:4178267"/>
<dbReference type="KEGG" id="palz:4178268"/>
<dbReference type="OrthoDB" id="7785at3646"/>
<dbReference type="GO" id="GO:0009507">
    <property type="term" value="C:chloroplast"/>
    <property type="evidence" value="ECO:0007669"/>
    <property type="project" value="UniProtKB-SubCell"/>
</dbReference>
<dbReference type="GO" id="GO:0015935">
    <property type="term" value="C:small ribosomal subunit"/>
    <property type="evidence" value="ECO:0007669"/>
    <property type="project" value="InterPro"/>
</dbReference>
<dbReference type="GO" id="GO:0019843">
    <property type="term" value="F:rRNA binding"/>
    <property type="evidence" value="ECO:0007669"/>
    <property type="project" value="UniProtKB-UniRule"/>
</dbReference>
<dbReference type="GO" id="GO:0003735">
    <property type="term" value="F:structural constituent of ribosome"/>
    <property type="evidence" value="ECO:0007669"/>
    <property type="project" value="InterPro"/>
</dbReference>
<dbReference type="GO" id="GO:0006412">
    <property type="term" value="P:translation"/>
    <property type="evidence" value="ECO:0007669"/>
    <property type="project" value="UniProtKB-UniRule"/>
</dbReference>
<dbReference type="CDD" id="cd14871">
    <property type="entry name" value="uS7_Chloroplast"/>
    <property type="match status" value="1"/>
</dbReference>
<dbReference type="FunFam" id="1.10.455.10:FF:000001">
    <property type="entry name" value="30S ribosomal protein S7"/>
    <property type="match status" value="1"/>
</dbReference>
<dbReference type="Gene3D" id="1.10.455.10">
    <property type="entry name" value="Ribosomal protein S7 domain"/>
    <property type="match status" value="1"/>
</dbReference>
<dbReference type="HAMAP" id="MF_00480_B">
    <property type="entry name" value="Ribosomal_uS7_B"/>
    <property type="match status" value="1"/>
</dbReference>
<dbReference type="InterPro" id="IPR000235">
    <property type="entry name" value="Ribosomal_uS7"/>
</dbReference>
<dbReference type="InterPro" id="IPR005717">
    <property type="entry name" value="Ribosomal_uS7_bac/org-type"/>
</dbReference>
<dbReference type="InterPro" id="IPR020606">
    <property type="entry name" value="Ribosomal_uS7_CS"/>
</dbReference>
<dbReference type="InterPro" id="IPR023798">
    <property type="entry name" value="Ribosomal_uS7_dom"/>
</dbReference>
<dbReference type="InterPro" id="IPR036823">
    <property type="entry name" value="Ribosomal_uS7_dom_sf"/>
</dbReference>
<dbReference type="NCBIfam" id="TIGR01029">
    <property type="entry name" value="rpsG_bact"/>
    <property type="match status" value="1"/>
</dbReference>
<dbReference type="PANTHER" id="PTHR11205">
    <property type="entry name" value="RIBOSOMAL PROTEIN S7"/>
    <property type="match status" value="1"/>
</dbReference>
<dbReference type="Pfam" id="PF00177">
    <property type="entry name" value="Ribosomal_S7"/>
    <property type="match status" value="1"/>
</dbReference>
<dbReference type="PIRSF" id="PIRSF002122">
    <property type="entry name" value="RPS7p_RPS7a_RPS5e_RPS7o"/>
    <property type="match status" value="1"/>
</dbReference>
<dbReference type="SUPFAM" id="SSF47973">
    <property type="entry name" value="Ribosomal protein S7"/>
    <property type="match status" value="1"/>
</dbReference>
<dbReference type="PROSITE" id="PS00052">
    <property type="entry name" value="RIBOSOMAL_S7"/>
    <property type="match status" value="1"/>
</dbReference>
<comment type="function">
    <text evidence="1">One of the primary rRNA binding proteins, it binds directly to 16S rRNA where it nucleates assembly of the head domain of the 30S subunit.</text>
</comment>
<comment type="subunit">
    <text>Part of the 30S ribosomal subunit.</text>
</comment>
<comment type="subcellular location">
    <subcellularLocation>
        <location>Plastid</location>
        <location>Chloroplast</location>
    </subcellularLocation>
</comment>
<comment type="similarity">
    <text evidence="3">Belongs to the universal ribosomal protein uS7 family.</text>
</comment>
<feature type="chain" id="PRO_0000277053" description="Small ribosomal subunit protein uS7cz/uS7cy">
    <location>
        <begin position="1"/>
        <end position="155"/>
    </location>
</feature>
<protein>
    <recommendedName>
        <fullName evidence="2">Small ribosomal subunit protein uS7cz/uS7cy</fullName>
    </recommendedName>
    <alternativeName>
        <fullName>30S ribosomal protein S7, chloroplastic</fullName>
    </alternativeName>
</protein>
<organism>
    <name type="scientific">Populus alba</name>
    <name type="common">White poplar</name>
    <dbReference type="NCBI Taxonomy" id="43335"/>
    <lineage>
        <taxon>Eukaryota</taxon>
        <taxon>Viridiplantae</taxon>
        <taxon>Streptophyta</taxon>
        <taxon>Embryophyta</taxon>
        <taxon>Tracheophyta</taxon>
        <taxon>Spermatophyta</taxon>
        <taxon>Magnoliopsida</taxon>
        <taxon>eudicotyledons</taxon>
        <taxon>Gunneridae</taxon>
        <taxon>Pentapetalae</taxon>
        <taxon>rosids</taxon>
        <taxon>fabids</taxon>
        <taxon>Malpighiales</taxon>
        <taxon>Salicaceae</taxon>
        <taxon>Saliceae</taxon>
        <taxon>Populus</taxon>
    </lineage>
</organism>
<keyword id="KW-0150">Chloroplast</keyword>
<keyword id="KW-0934">Plastid</keyword>
<keyword id="KW-0687">Ribonucleoprotein</keyword>
<keyword id="KW-0689">Ribosomal protein</keyword>
<keyword id="KW-0694">RNA-binding</keyword>
<keyword id="KW-0699">rRNA-binding</keyword>
<evidence type="ECO:0000250" key="1"/>
<evidence type="ECO:0000255" key="2">
    <source>
        <dbReference type="HAMAP-Rule" id="MF_00480"/>
    </source>
</evidence>
<evidence type="ECO:0000305" key="3"/>
<sequence length="155" mass="17384">MSRRGTAEEKTAKSDPIYRNRLVNMLVNRILKHGKKSLAYQILYRAMKKIQQKTETNPLSVLHQAIRGVTPDIAVKARRVGGSTHQVPIEIGSTQGKALAIRWLLGASRKRPGRNMVFKLSSELVDAAKGSGDAIRKKEETHRMAEANRAFAHFR</sequence>
<name>RR7_POPAL</name>
<reference key="1">
    <citation type="submission" date="2005-03" db="EMBL/GenBank/DDBJ databases">
        <title>Complete structure of the chloroplast genome of Populus alba.</title>
        <authorList>
            <person name="Okumura S."/>
            <person name="Yamashita A."/>
            <person name="Kanamoto H."/>
            <person name="Hattori M."/>
            <person name="Takase H."/>
            <person name="Tomizawa K."/>
        </authorList>
    </citation>
    <scope>NUCLEOTIDE SEQUENCE [LARGE SCALE GENOMIC DNA]</scope>
</reference>